<keyword id="KW-0067">ATP-binding</keyword>
<keyword id="KW-0963">Cytoplasm</keyword>
<keyword id="KW-0418">Kinase</keyword>
<keyword id="KW-0547">Nucleotide-binding</keyword>
<keyword id="KW-0665">Pyrimidine biosynthesis</keyword>
<keyword id="KW-1185">Reference proteome</keyword>
<keyword id="KW-0808">Transferase</keyword>
<protein>
    <recommendedName>
        <fullName evidence="1">Uridylate kinase</fullName>
        <shortName evidence="1">UK</shortName>
        <ecNumber evidence="1">2.7.4.22</ecNumber>
    </recommendedName>
    <alternativeName>
        <fullName evidence="1">Uridine monophosphate kinase</fullName>
        <shortName evidence="1">UMP kinase</shortName>
        <shortName evidence="1">UMPK</shortName>
    </alternativeName>
</protein>
<organism>
    <name type="scientific">Acidothermus cellulolyticus (strain ATCC 43068 / DSM 8971 / 11B)</name>
    <dbReference type="NCBI Taxonomy" id="351607"/>
    <lineage>
        <taxon>Bacteria</taxon>
        <taxon>Bacillati</taxon>
        <taxon>Actinomycetota</taxon>
        <taxon>Actinomycetes</taxon>
        <taxon>Acidothermales</taxon>
        <taxon>Acidothermaceae</taxon>
        <taxon>Acidothermus</taxon>
    </lineage>
</organism>
<dbReference type="EC" id="2.7.4.22" evidence="1"/>
<dbReference type="EMBL" id="CP000481">
    <property type="protein sequence ID" value="ABK53312.1"/>
    <property type="molecule type" value="Genomic_DNA"/>
</dbReference>
<dbReference type="RefSeq" id="WP_011720375.1">
    <property type="nucleotide sequence ID" value="NC_008578.1"/>
</dbReference>
<dbReference type="SMR" id="A0LV52"/>
<dbReference type="FunCoup" id="A0LV52">
    <property type="interactions" value="275"/>
</dbReference>
<dbReference type="STRING" id="351607.Acel_1540"/>
<dbReference type="KEGG" id="ace:Acel_1540"/>
<dbReference type="eggNOG" id="COG0528">
    <property type="taxonomic scope" value="Bacteria"/>
</dbReference>
<dbReference type="HOGENOM" id="CLU_033861_0_0_11"/>
<dbReference type="InParanoid" id="A0LV52"/>
<dbReference type="OrthoDB" id="9807458at2"/>
<dbReference type="UniPathway" id="UPA00159">
    <property type="reaction ID" value="UER00275"/>
</dbReference>
<dbReference type="Proteomes" id="UP000008221">
    <property type="component" value="Chromosome"/>
</dbReference>
<dbReference type="GO" id="GO:0005737">
    <property type="term" value="C:cytoplasm"/>
    <property type="evidence" value="ECO:0007669"/>
    <property type="project" value="UniProtKB-SubCell"/>
</dbReference>
<dbReference type="GO" id="GO:0005524">
    <property type="term" value="F:ATP binding"/>
    <property type="evidence" value="ECO:0007669"/>
    <property type="project" value="UniProtKB-KW"/>
</dbReference>
<dbReference type="GO" id="GO:0033862">
    <property type="term" value="F:UMP kinase activity"/>
    <property type="evidence" value="ECO:0007669"/>
    <property type="project" value="UniProtKB-EC"/>
</dbReference>
<dbReference type="GO" id="GO:0044210">
    <property type="term" value="P:'de novo' CTP biosynthetic process"/>
    <property type="evidence" value="ECO:0007669"/>
    <property type="project" value="UniProtKB-UniRule"/>
</dbReference>
<dbReference type="GO" id="GO:0006225">
    <property type="term" value="P:UDP biosynthetic process"/>
    <property type="evidence" value="ECO:0007669"/>
    <property type="project" value="TreeGrafter"/>
</dbReference>
<dbReference type="CDD" id="cd04254">
    <property type="entry name" value="AAK_UMPK-PyrH-Ec"/>
    <property type="match status" value="1"/>
</dbReference>
<dbReference type="FunFam" id="3.40.1160.10:FF:000001">
    <property type="entry name" value="Uridylate kinase"/>
    <property type="match status" value="1"/>
</dbReference>
<dbReference type="Gene3D" id="3.40.1160.10">
    <property type="entry name" value="Acetylglutamate kinase-like"/>
    <property type="match status" value="1"/>
</dbReference>
<dbReference type="HAMAP" id="MF_01220_B">
    <property type="entry name" value="PyrH_B"/>
    <property type="match status" value="1"/>
</dbReference>
<dbReference type="InterPro" id="IPR036393">
    <property type="entry name" value="AceGlu_kinase-like_sf"/>
</dbReference>
<dbReference type="InterPro" id="IPR001048">
    <property type="entry name" value="Asp/Glu/Uridylate_kinase"/>
</dbReference>
<dbReference type="InterPro" id="IPR011817">
    <property type="entry name" value="Uridylate_kinase"/>
</dbReference>
<dbReference type="InterPro" id="IPR015963">
    <property type="entry name" value="Uridylate_kinase_bac"/>
</dbReference>
<dbReference type="NCBIfam" id="TIGR02075">
    <property type="entry name" value="pyrH_bact"/>
    <property type="match status" value="1"/>
</dbReference>
<dbReference type="PANTHER" id="PTHR42833">
    <property type="entry name" value="URIDYLATE KINASE"/>
    <property type="match status" value="1"/>
</dbReference>
<dbReference type="PANTHER" id="PTHR42833:SF4">
    <property type="entry name" value="URIDYLATE KINASE PUMPKIN, CHLOROPLASTIC"/>
    <property type="match status" value="1"/>
</dbReference>
<dbReference type="Pfam" id="PF00696">
    <property type="entry name" value="AA_kinase"/>
    <property type="match status" value="1"/>
</dbReference>
<dbReference type="PIRSF" id="PIRSF005650">
    <property type="entry name" value="Uridylate_kin"/>
    <property type="match status" value="1"/>
</dbReference>
<dbReference type="SUPFAM" id="SSF53633">
    <property type="entry name" value="Carbamate kinase-like"/>
    <property type="match status" value="1"/>
</dbReference>
<sequence length="266" mass="28119">MADGEGGAASAPTAGTRPVYRRVLLKLGGEMFGGGHVGVDPDIVASIARQIAAVVAEGVQMAVVIGGGNFFRGAELSVRGMDRARSDYMGMLGTVMNCLALQDFLEKLGVDTRVQTAITMGQVAEPYIPRRAIRHMEKGRVVIFGAGLGAPYFSTDTTAAQRALEIGAEVVLMAKAVDGVYDSDPKTNADAVRFDHLDYDEVLARDLKFADATAISLCRDNGMPIIVFNLLEEGNIARAVHGEKIGTIVSSGDGVPPRRQAVSPAR</sequence>
<evidence type="ECO:0000255" key="1">
    <source>
        <dbReference type="HAMAP-Rule" id="MF_01220"/>
    </source>
</evidence>
<comment type="function">
    <text evidence="1">Catalyzes the reversible phosphorylation of UMP to UDP.</text>
</comment>
<comment type="catalytic activity">
    <reaction evidence="1">
        <text>UMP + ATP = UDP + ADP</text>
        <dbReference type="Rhea" id="RHEA:24400"/>
        <dbReference type="ChEBI" id="CHEBI:30616"/>
        <dbReference type="ChEBI" id="CHEBI:57865"/>
        <dbReference type="ChEBI" id="CHEBI:58223"/>
        <dbReference type="ChEBI" id="CHEBI:456216"/>
        <dbReference type="EC" id="2.7.4.22"/>
    </reaction>
</comment>
<comment type="activity regulation">
    <text evidence="1">Inhibited by UTP.</text>
</comment>
<comment type="pathway">
    <text evidence="1">Pyrimidine metabolism; CTP biosynthesis via de novo pathway; UDP from UMP (UMPK route): step 1/1.</text>
</comment>
<comment type="subunit">
    <text evidence="1">Homohexamer.</text>
</comment>
<comment type="subcellular location">
    <subcellularLocation>
        <location evidence="1">Cytoplasm</location>
    </subcellularLocation>
</comment>
<comment type="similarity">
    <text evidence="1">Belongs to the UMP kinase family.</text>
</comment>
<name>PYRH_ACIC1</name>
<feature type="chain" id="PRO_0000323775" description="Uridylate kinase">
    <location>
        <begin position="1"/>
        <end position="266"/>
    </location>
</feature>
<feature type="binding site" evidence="1">
    <location>
        <begin position="26"/>
        <end position="29"/>
    </location>
    <ligand>
        <name>ATP</name>
        <dbReference type="ChEBI" id="CHEBI:30616"/>
    </ligand>
</feature>
<feature type="binding site" evidence="1">
    <location>
        <position position="67"/>
    </location>
    <ligand>
        <name>UMP</name>
        <dbReference type="ChEBI" id="CHEBI:57865"/>
    </ligand>
</feature>
<feature type="binding site" evidence="1">
    <location>
        <position position="68"/>
    </location>
    <ligand>
        <name>ATP</name>
        <dbReference type="ChEBI" id="CHEBI:30616"/>
    </ligand>
</feature>
<feature type="binding site" evidence="1">
    <location>
        <position position="72"/>
    </location>
    <ligand>
        <name>ATP</name>
        <dbReference type="ChEBI" id="CHEBI:30616"/>
    </ligand>
</feature>
<feature type="binding site" evidence="1">
    <location>
        <position position="87"/>
    </location>
    <ligand>
        <name>UMP</name>
        <dbReference type="ChEBI" id="CHEBI:57865"/>
    </ligand>
</feature>
<feature type="binding site" evidence="1">
    <location>
        <begin position="148"/>
        <end position="155"/>
    </location>
    <ligand>
        <name>UMP</name>
        <dbReference type="ChEBI" id="CHEBI:57865"/>
    </ligand>
</feature>
<feature type="binding site" evidence="1">
    <location>
        <position position="181"/>
    </location>
    <ligand>
        <name>ATP</name>
        <dbReference type="ChEBI" id="CHEBI:30616"/>
    </ligand>
</feature>
<feature type="binding site" evidence="1">
    <location>
        <position position="184"/>
    </location>
    <ligand>
        <name>ATP</name>
        <dbReference type="ChEBI" id="CHEBI:30616"/>
    </ligand>
</feature>
<gene>
    <name evidence="1" type="primary">pyrH</name>
    <name type="ordered locus">Acel_1540</name>
</gene>
<reference key="1">
    <citation type="journal article" date="2009" name="Genome Res.">
        <title>Complete genome of the cellulolytic thermophile Acidothermus cellulolyticus 11B provides insights into its ecophysiological and evolutionary adaptations.</title>
        <authorList>
            <person name="Barabote R.D."/>
            <person name="Xie G."/>
            <person name="Leu D.H."/>
            <person name="Normand P."/>
            <person name="Necsulea A."/>
            <person name="Daubin V."/>
            <person name="Medigue C."/>
            <person name="Adney W.S."/>
            <person name="Xu X.C."/>
            <person name="Lapidus A."/>
            <person name="Parales R.E."/>
            <person name="Detter C."/>
            <person name="Pujic P."/>
            <person name="Bruce D."/>
            <person name="Lavire C."/>
            <person name="Challacombe J.F."/>
            <person name="Brettin T.S."/>
            <person name="Berry A.M."/>
        </authorList>
    </citation>
    <scope>NUCLEOTIDE SEQUENCE [LARGE SCALE GENOMIC DNA]</scope>
    <source>
        <strain>ATCC 43068 / DSM 8971 / 11B</strain>
    </source>
</reference>
<proteinExistence type="inferred from homology"/>
<accession>A0LV52</accession>